<proteinExistence type="inferred from homology"/>
<feature type="chain" id="PRO_0000412179" description="Orotate phosphoribosyltransferase">
    <location>
        <begin position="1"/>
        <end position="210"/>
    </location>
</feature>
<feature type="binding site" evidence="1">
    <location>
        <position position="97"/>
    </location>
    <ligand>
        <name>5-phospho-alpha-D-ribose 1-diphosphate</name>
        <dbReference type="ChEBI" id="CHEBI:58017"/>
        <note>ligand shared between dimeric partners</note>
    </ligand>
</feature>
<feature type="binding site" evidence="1">
    <location>
        <position position="101"/>
    </location>
    <ligand>
        <name>5-phospho-alpha-D-ribose 1-diphosphate</name>
        <dbReference type="ChEBI" id="CHEBI:58017"/>
        <note>ligand shared between dimeric partners</note>
    </ligand>
</feature>
<feature type="binding site" evidence="1">
    <location>
        <position position="103"/>
    </location>
    <ligand>
        <name>5-phospho-alpha-D-ribose 1-diphosphate</name>
        <dbReference type="ChEBI" id="CHEBI:58017"/>
        <note>ligand shared between dimeric partners</note>
    </ligand>
</feature>
<feature type="binding site" description="in other chain" evidence="1">
    <location>
        <begin position="123"/>
        <end position="131"/>
    </location>
    <ligand>
        <name>5-phospho-alpha-D-ribose 1-diphosphate</name>
        <dbReference type="ChEBI" id="CHEBI:58017"/>
        <note>ligand shared between dimeric partners</note>
    </ligand>
</feature>
<feature type="binding site" evidence="1">
    <location>
        <position position="127"/>
    </location>
    <ligand>
        <name>orotate</name>
        <dbReference type="ChEBI" id="CHEBI:30839"/>
    </ligand>
</feature>
<reference key="1">
    <citation type="journal article" date="2008" name="Genome Biol.">
        <title>Large scale variation in Enterococcus faecalis illustrated by the genome analysis of strain OG1RF.</title>
        <authorList>
            <person name="Bourgogne A."/>
            <person name="Garsin D.A."/>
            <person name="Qin X."/>
            <person name="Singh K.V."/>
            <person name="Sillanpaa J."/>
            <person name="Yerrapragada S."/>
            <person name="Ding Y."/>
            <person name="Dugan-Rocha S."/>
            <person name="Buhay C."/>
            <person name="Shen H."/>
            <person name="Chen G."/>
            <person name="Williams G."/>
            <person name="Muzny D."/>
            <person name="Maadani A."/>
            <person name="Fox K.A."/>
            <person name="Gioia J."/>
            <person name="Chen L."/>
            <person name="Shang Y."/>
            <person name="Arias C.A."/>
            <person name="Nallapareddy S.R."/>
            <person name="Zhao M."/>
            <person name="Prakash V.P."/>
            <person name="Chowdhury S."/>
            <person name="Jiang H."/>
            <person name="Gibbs R.A."/>
            <person name="Murray B.E."/>
            <person name="Highlander S.K."/>
            <person name="Weinstock G.M."/>
        </authorList>
    </citation>
    <scope>NUCLEOTIDE SEQUENCE [LARGE SCALE GENOMIC DNA]</scope>
    <source>
        <strain>ATCC 47077 / OG1RF</strain>
    </source>
</reference>
<reference key="2">
    <citation type="journal article" date="1995" name="J. Bacteriol.">
        <title>Generation of auxotrophic mutants of Enterococcus faecalis.</title>
        <authorList>
            <person name="Li X."/>
            <person name="Weinstock G.M."/>
            <person name="Murray B.E."/>
        </authorList>
    </citation>
    <scope>NUCLEOTIDE SEQUENCE [GENOMIC DNA] OF 27-138</scope>
    <source>
        <strain>ATCC 47077 / OG1RF</strain>
    </source>
</reference>
<evidence type="ECO:0000255" key="1">
    <source>
        <dbReference type="HAMAP-Rule" id="MF_01208"/>
    </source>
</evidence>
<evidence type="ECO:0000305" key="2"/>
<sequence>MTKVAKKIAKDLLDIEAVFLNPNEPFTWASGIKSPIYCDNRITMSYPAVRKEIAEGLAAKIKETFPEVEVIAGTATAGIPHAAWVADILGLPMVYIRSKAKDHGKGNQIEGRISEGQKMVVIEDLISTGGSVLEAAEAAEREGATVLGVAAIFTYELPKGTANFADKQMTLLTLTNYSTLIDAALEANYIEEKDVTLLQEWKKDPENWGK</sequence>
<organism>
    <name type="scientific">Enterococcus faecalis (strain ATCC 47077 / OG1RF)</name>
    <dbReference type="NCBI Taxonomy" id="474186"/>
    <lineage>
        <taxon>Bacteria</taxon>
        <taxon>Bacillati</taxon>
        <taxon>Bacillota</taxon>
        <taxon>Bacilli</taxon>
        <taxon>Lactobacillales</taxon>
        <taxon>Enterococcaceae</taxon>
        <taxon>Enterococcus</taxon>
    </lineage>
</organism>
<dbReference type="EC" id="2.4.2.10" evidence="1"/>
<dbReference type="EMBL" id="CP002621">
    <property type="protein sequence ID" value="AEA94110.1"/>
    <property type="status" value="ALT_INIT"/>
    <property type="molecule type" value="Genomic_DNA"/>
</dbReference>
<dbReference type="EMBL" id="U24682">
    <property type="protein sequence ID" value="AAB61216.1"/>
    <property type="molecule type" value="Genomic_DNA"/>
</dbReference>
<dbReference type="RefSeq" id="WP_002357418.1">
    <property type="nucleotide sequence ID" value="NZ_JAWXYD010000001.1"/>
</dbReference>
<dbReference type="SMR" id="F2MMN7"/>
<dbReference type="GeneID" id="60894008"/>
<dbReference type="KEGG" id="efi:OG1RF_11423"/>
<dbReference type="HOGENOM" id="CLU_074878_1_1_9"/>
<dbReference type="UniPathway" id="UPA00070">
    <property type="reaction ID" value="UER00119"/>
</dbReference>
<dbReference type="GO" id="GO:0000287">
    <property type="term" value="F:magnesium ion binding"/>
    <property type="evidence" value="ECO:0007669"/>
    <property type="project" value="UniProtKB-UniRule"/>
</dbReference>
<dbReference type="GO" id="GO:0004588">
    <property type="term" value="F:orotate phosphoribosyltransferase activity"/>
    <property type="evidence" value="ECO:0007669"/>
    <property type="project" value="UniProtKB-UniRule"/>
</dbReference>
<dbReference type="GO" id="GO:0044205">
    <property type="term" value="P:'de novo' UMP biosynthetic process"/>
    <property type="evidence" value="ECO:0007669"/>
    <property type="project" value="UniProtKB-UniRule"/>
</dbReference>
<dbReference type="GO" id="GO:0019856">
    <property type="term" value="P:pyrimidine nucleobase biosynthetic process"/>
    <property type="evidence" value="ECO:0007669"/>
    <property type="project" value="TreeGrafter"/>
</dbReference>
<dbReference type="CDD" id="cd06223">
    <property type="entry name" value="PRTases_typeI"/>
    <property type="match status" value="1"/>
</dbReference>
<dbReference type="Gene3D" id="3.40.50.2020">
    <property type="match status" value="1"/>
</dbReference>
<dbReference type="HAMAP" id="MF_01208">
    <property type="entry name" value="PyrE"/>
    <property type="match status" value="1"/>
</dbReference>
<dbReference type="InterPro" id="IPR023031">
    <property type="entry name" value="OPRT"/>
</dbReference>
<dbReference type="InterPro" id="IPR004467">
    <property type="entry name" value="Or_phspho_trans_dom"/>
</dbReference>
<dbReference type="InterPro" id="IPR000836">
    <property type="entry name" value="PRibTrfase_dom"/>
</dbReference>
<dbReference type="InterPro" id="IPR029057">
    <property type="entry name" value="PRTase-like"/>
</dbReference>
<dbReference type="NCBIfam" id="TIGR00336">
    <property type="entry name" value="pyrE"/>
    <property type="match status" value="1"/>
</dbReference>
<dbReference type="PANTHER" id="PTHR19278">
    <property type="entry name" value="OROTATE PHOSPHORIBOSYLTRANSFERASE"/>
    <property type="match status" value="1"/>
</dbReference>
<dbReference type="PANTHER" id="PTHR19278:SF9">
    <property type="entry name" value="URIDINE 5'-MONOPHOSPHATE SYNTHASE"/>
    <property type="match status" value="1"/>
</dbReference>
<dbReference type="Pfam" id="PF00156">
    <property type="entry name" value="Pribosyltran"/>
    <property type="match status" value="1"/>
</dbReference>
<dbReference type="SUPFAM" id="SSF53271">
    <property type="entry name" value="PRTase-like"/>
    <property type="match status" value="1"/>
</dbReference>
<dbReference type="PROSITE" id="PS00103">
    <property type="entry name" value="PUR_PYR_PR_TRANSFER"/>
    <property type="match status" value="1"/>
</dbReference>
<gene>
    <name evidence="1" type="primary">pyrE</name>
    <name type="ordered locus">OG1RF_11423</name>
</gene>
<accession>F2MMN7</accession>
<accession>O07657</accession>
<keyword id="KW-0328">Glycosyltransferase</keyword>
<keyword id="KW-0460">Magnesium</keyword>
<keyword id="KW-0665">Pyrimidine biosynthesis</keyword>
<keyword id="KW-0808">Transferase</keyword>
<comment type="function">
    <text evidence="1">Catalyzes the transfer of a ribosyl phosphate group from 5-phosphoribose 1-diphosphate to orotate, leading to the formation of orotidine monophosphate (OMP).</text>
</comment>
<comment type="catalytic activity">
    <reaction evidence="1">
        <text>orotidine 5'-phosphate + diphosphate = orotate + 5-phospho-alpha-D-ribose 1-diphosphate</text>
        <dbReference type="Rhea" id="RHEA:10380"/>
        <dbReference type="ChEBI" id="CHEBI:30839"/>
        <dbReference type="ChEBI" id="CHEBI:33019"/>
        <dbReference type="ChEBI" id="CHEBI:57538"/>
        <dbReference type="ChEBI" id="CHEBI:58017"/>
        <dbReference type="EC" id="2.4.2.10"/>
    </reaction>
</comment>
<comment type="cofactor">
    <cofactor evidence="1">
        <name>Mg(2+)</name>
        <dbReference type="ChEBI" id="CHEBI:18420"/>
    </cofactor>
</comment>
<comment type="pathway">
    <text evidence="1">Pyrimidine metabolism; UMP biosynthesis via de novo pathway; UMP from orotate: step 1/2.</text>
</comment>
<comment type="subunit">
    <text evidence="1">Homodimer.</text>
</comment>
<comment type="similarity">
    <text evidence="1">Belongs to the purine/pyrimidine phosphoribosyltransferase family. PyrE subfamily.</text>
</comment>
<comment type="sequence caution" evidence="2">
    <conflict type="erroneous initiation">
        <sequence resource="EMBL-CDS" id="AEA94110"/>
    </conflict>
    <text>Extended N-terminus.</text>
</comment>
<name>PYRE_ENTFO</name>
<protein>
    <recommendedName>
        <fullName evidence="1">Orotate phosphoribosyltransferase</fullName>
        <shortName evidence="1">OPRT</shortName>
        <shortName evidence="1">OPRTase</shortName>
        <ecNumber evidence="1">2.4.2.10</ecNumber>
    </recommendedName>
</protein>